<feature type="peptide" id="PRO_0000378724" description="Pyrokinin-5" evidence="3">
    <location>
        <begin position="1"/>
        <end position="17"/>
    </location>
</feature>
<feature type="modified residue" description="Leucine amide" evidence="3">
    <location>
        <position position="17"/>
    </location>
</feature>
<dbReference type="GO" id="GO:0005576">
    <property type="term" value="C:extracellular region"/>
    <property type="evidence" value="ECO:0007669"/>
    <property type="project" value="UniProtKB-SubCell"/>
</dbReference>
<dbReference type="GO" id="GO:0005184">
    <property type="term" value="F:neuropeptide hormone activity"/>
    <property type="evidence" value="ECO:0007669"/>
    <property type="project" value="InterPro"/>
</dbReference>
<dbReference type="GO" id="GO:0007218">
    <property type="term" value="P:neuropeptide signaling pathway"/>
    <property type="evidence" value="ECO:0007669"/>
    <property type="project" value="UniProtKB-KW"/>
</dbReference>
<dbReference type="InterPro" id="IPR001484">
    <property type="entry name" value="Pyrokinin_CS"/>
</dbReference>
<dbReference type="PROSITE" id="PS00539">
    <property type="entry name" value="PYROKININ"/>
    <property type="match status" value="1"/>
</dbReference>
<reference evidence="5" key="1">
    <citation type="journal article" date="2009" name="BMC Evol. Biol.">
        <title>A proteomic approach for studying insect phylogeny: CAPA peptides of ancient insect taxa (Dictyoptera, Blattoptera) as a test case.</title>
        <authorList>
            <person name="Roth S."/>
            <person name="Fromm B."/>
            <person name="Gaede G."/>
            <person name="Predel R."/>
        </authorList>
    </citation>
    <scope>PROTEIN SEQUENCE</scope>
    <scope>AMIDATION AT LEU-17</scope>
    <source>
        <tissue evidence="3">Abdominal perisympathetic organs</tissue>
    </source>
</reference>
<protein>
    <recommendedName>
        <fullName evidence="1">Pyrokinin-5</fullName>
    </recommendedName>
    <alternativeName>
        <fullName evidence="1">FXPRL-amide</fullName>
    </alternativeName>
    <alternativeName>
        <fullName evidence="4">SupDi-Capa-PK</fullName>
    </alternativeName>
</protein>
<organism>
    <name type="scientific">Supella dimidiata</name>
    <name type="common">Cockroach</name>
    <dbReference type="NCBI Taxonomy" id="521517"/>
    <lineage>
        <taxon>Eukaryota</taxon>
        <taxon>Metazoa</taxon>
        <taxon>Ecdysozoa</taxon>
        <taxon>Arthropoda</taxon>
        <taxon>Hexapoda</taxon>
        <taxon>Insecta</taxon>
        <taxon>Pterygota</taxon>
        <taxon>Neoptera</taxon>
        <taxon>Polyneoptera</taxon>
        <taxon>Dictyoptera</taxon>
        <taxon>Blattodea</taxon>
        <taxon>Blaberoidea</taxon>
        <taxon>Ectobiidae</taxon>
        <taxon>Plectopterinae</taxon>
        <taxon>Supella</taxon>
    </lineage>
</organism>
<sequence>GGGSSGETNGMWFGPRL</sequence>
<proteinExistence type="evidence at protein level"/>
<name>PPK5_SUPDI</name>
<evidence type="ECO:0000250" key="1">
    <source>
        <dbReference type="UniProtKB" id="P82617"/>
    </source>
</evidence>
<evidence type="ECO:0000255" key="2"/>
<evidence type="ECO:0000269" key="3">
    <source>
    </source>
</evidence>
<evidence type="ECO:0000303" key="4">
    <source>
    </source>
</evidence>
<evidence type="ECO:0000305" key="5"/>
<keyword id="KW-0027">Amidation</keyword>
<keyword id="KW-0903">Direct protein sequencing</keyword>
<keyword id="KW-0527">Neuropeptide</keyword>
<keyword id="KW-0964">Secreted</keyword>
<accession>P85777</accession>
<comment type="function">
    <text evidence="1">Myoactive.</text>
</comment>
<comment type="subcellular location">
    <subcellularLocation>
        <location evidence="5">Secreted</location>
    </subcellularLocation>
</comment>
<comment type="similarity">
    <text evidence="2">Belongs to the pyrokinin family.</text>
</comment>